<accession>Q040Z7</accession>
<feature type="chain" id="PRO_0000301473" description="Putative N-acetylmannosamine-6-phosphate 2-epimerase">
    <location>
        <begin position="1"/>
        <end position="230"/>
    </location>
</feature>
<proteinExistence type="inferred from homology"/>
<organism>
    <name type="scientific">Lactobacillus gasseri (strain ATCC 33323 / DSM 20243 / BCRC 14619 / CIP 102991 / JCM 1131 / KCTC 3163 / NCIMB 11718 / NCTC 13722 / AM63)</name>
    <dbReference type="NCBI Taxonomy" id="324831"/>
    <lineage>
        <taxon>Bacteria</taxon>
        <taxon>Bacillati</taxon>
        <taxon>Bacillota</taxon>
        <taxon>Bacilli</taxon>
        <taxon>Lactobacillales</taxon>
        <taxon>Lactobacillaceae</taxon>
        <taxon>Lactobacillus</taxon>
    </lineage>
</organism>
<reference key="1">
    <citation type="journal article" date="2006" name="Proc. Natl. Acad. Sci. U.S.A.">
        <title>Comparative genomics of the lactic acid bacteria.</title>
        <authorList>
            <person name="Makarova K.S."/>
            <person name="Slesarev A."/>
            <person name="Wolf Y.I."/>
            <person name="Sorokin A."/>
            <person name="Mirkin B."/>
            <person name="Koonin E.V."/>
            <person name="Pavlov A."/>
            <person name="Pavlova N."/>
            <person name="Karamychev V."/>
            <person name="Polouchine N."/>
            <person name="Shakhova V."/>
            <person name="Grigoriev I."/>
            <person name="Lou Y."/>
            <person name="Rohksar D."/>
            <person name="Lucas S."/>
            <person name="Huang K."/>
            <person name="Goodstein D.M."/>
            <person name="Hawkins T."/>
            <person name="Plengvidhya V."/>
            <person name="Welker D."/>
            <person name="Hughes J."/>
            <person name="Goh Y."/>
            <person name="Benson A."/>
            <person name="Baldwin K."/>
            <person name="Lee J.-H."/>
            <person name="Diaz-Muniz I."/>
            <person name="Dosti B."/>
            <person name="Smeianov V."/>
            <person name="Wechter W."/>
            <person name="Barabote R."/>
            <person name="Lorca G."/>
            <person name="Altermann E."/>
            <person name="Barrangou R."/>
            <person name="Ganesan B."/>
            <person name="Xie Y."/>
            <person name="Rawsthorne H."/>
            <person name="Tamir D."/>
            <person name="Parker C."/>
            <person name="Breidt F."/>
            <person name="Broadbent J.R."/>
            <person name="Hutkins R."/>
            <person name="O'Sullivan D."/>
            <person name="Steele J."/>
            <person name="Unlu G."/>
            <person name="Saier M.H. Jr."/>
            <person name="Klaenhammer T."/>
            <person name="Richardson P."/>
            <person name="Kozyavkin S."/>
            <person name="Weimer B.C."/>
            <person name="Mills D.A."/>
        </authorList>
    </citation>
    <scope>NUCLEOTIDE SEQUENCE [LARGE SCALE GENOMIC DNA]</scope>
    <source>
        <strain>ATCC 33323 / DSM 20243 / BCRC 14619 / CIP 102991 / JCM 1131 / KCTC 3163 / NCIMB 11718 / NCTC 13722 / AM63</strain>
    </source>
</reference>
<evidence type="ECO:0000255" key="1">
    <source>
        <dbReference type="HAMAP-Rule" id="MF_01235"/>
    </source>
</evidence>
<keyword id="KW-0119">Carbohydrate metabolism</keyword>
<keyword id="KW-0413">Isomerase</keyword>
<name>NANE_LACGA</name>
<comment type="function">
    <text evidence="1">Converts N-acetylmannosamine-6-phosphate (ManNAc-6-P) to N-acetylglucosamine-6-phosphate (GlcNAc-6-P).</text>
</comment>
<comment type="catalytic activity">
    <reaction evidence="1">
        <text>an N-acyl-D-glucosamine 6-phosphate = an N-acyl-D-mannosamine 6-phosphate</text>
        <dbReference type="Rhea" id="RHEA:23932"/>
        <dbReference type="ChEBI" id="CHEBI:57599"/>
        <dbReference type="ChEBI" id="CHEBI:57666"/>
        <dbReference type="EC" id="5.1.3.9"/>
    </reaction>
</comment>
<comment type="pathway">
    <text evidence="1">Amino-sugar metabolism; N-acetylneuraminate degradation; D-fructose 6-phosphate from N-acetylneuraminate: step 3/5.</text>
</comment>
<comment type="similarity">
    <text evidence="1">Belongs to the NanE family.</text>
</comment>
<gene>
    <name evidence="1" type="primary">nanE</name>
    <name type="ordered locus">LGAS_1687</name>
</gene>
<sequence length="230" mass="25191">MNKEEFINKIHGGLIISCQALPGEPLYTEEGGIMPLMAKAAQEAGATGLRANSVRDIKQIKKVVDLPMIGIIKRDYPPEKPYITPTMKEVDELMETGVEVIALDCTLRPRHDGKTVAEFIKEIKAKYPNQLLMADTSNFEEAKNAYEAGVDFVGTTLSGYTEESPKTDHPDFDLIKALVDDGLPVIAEGKIHTPEQLKQVIDINPAGIVVGGAITRPLQIAKTFTSVFEK</sequence>
<protein>
    <recommendedName>
        <fullName evidence="1">Putative N-acetylmannosamine-6-phosphate 2-epimerase</fullName>
        <ecNumber evidence="1">5.1.3.9</ecNumber>
    </recommendedName>
    <alternativeName>
        <fullName evidence="1">ManNAc-6-P epimerase</fullName>
    </alternativeName>
</protein>
<dbReference type="EC" id="5.1.3.9" evidence="1"/>
<dbReference type="EMBL" id="CP000413">
    <property type="protein sequence ID" value="ABJ60975.1"/>
    <property type="molecule type" value="Genomic_DNA"/>
</dbReference>
<dbReference type="RefSeq" id="WP_003657024.1">
    <property type="nucleotide sequence ID" value="NZ_WBMG01000007.1"/>
</dbReference>
<dbReference type="SMR" id="Q040Z7"/>
<dbReference type="GeneID" id="29639603"/>
<dbReference type="KEGG" id="lga:LGAS_1687"/>
<dbReference type="HOGENOM" id="CLU_086300_1_0_9"/>
<dbReference type="BioCyc" id="LGAS324831:G1G6Y-1680-MONOMER"/>
<dbReference type="UniPathway" id="UPA00629">
    <property type="reaction ID" value="UER00682"/>
</dbReference>
<dbReference type="Proteomes" id="UP000000664">
    <property type="component" value="Chromosome"/>
</dbReference>
<dbReference type="GO" id="GO:0005829">
    <property type="term" value="C:cytosol"/>
    <property type="evidence" value="ECO:0007669"/>
    <property type="project" value="TreeGrafter"/>
</dbReference>
<dbReference type="GO" id="GO:0047465">
    <property type="term" value="F:N-acylglucosamine-6-phosphate 2-epimerase activity"/>
    <property type="evidence" value="ECO:0007669"/>
    <property type="project" value="UniProtKB-EC"/>
</dbReference>
<dbReference type="GO" id="GO:0005975">
    <property type="term" value="P:carbohydrate metabolic process"/>
    <property type="evidence" value="ECO:0007669"/>
    <property type="project" value="UniProtKB-UniRule"/>
</dbReference>
<dbReference type="GO" id="GO:0006053">
    <property type="term" value="P:N-acetylmannosamine catabolic process"/>
    <property type="evidence" value="ECO:0007669"/>
    <property type="project" value="TreeGrafter"/>
</dbReference>
<dbReference type="GO" id="GO:0019262">
    <property type="term" value="P:N-acetylneuraminate catabolic process"/>
    <property type="evidence" value="ECO:0007669"/>
    <property type="project" value="UniProtKB-UniRule"/>
</dbReference>
<dbReference type="CDD" id="cd04729">
    <property type="entry name" value="NanE"/>
    <property type="match status" value="1"/>
</dbReference>
<dbReference type="FunFam" id="3.20.20.70:FF:000035">
    <property type="entry name" value="Putative N-acetylmannosamine-6-phosphate 2-epimerase"/>
    <property type="match status" value="1"/>
</dbReference>
<dbReference type="Gene3D" id="3.20.20.70">
    <property type="entry name" value="Aldolase class I"/>
    <property type="match status" value="1"/>
</dbReference>
<dbReference type="HAMAP" id="MF_01235">
    <property type="entry name" value="ManNAc6P_epimer"/>
    <property type="match status" value="1"/>
</dbReference>
<dbReference type="InterPro" id="IPR013785">
    <property type="entry name" value="Aldolase_TIM"/>
</dbReference>
<dbReference type="InterPro" id="IPR007260">
    <property type="entry name" value="NanE"/>
</dbReference>
<dbReference type="InterPro" id="IPR011060">
    <property type="entry name" value="RibuloseP-bd_barrel"/>
</dbReference>
<dbReference type="NCBIfam" id="NF002231">
    <property type="entry name" value="PRK01130.1"/>
    <property type="match status" value="1"/>
</dbReference>
<dbReference type="PANTHER" id="PTHR36204">
    <property type="entry name" value="N-ACETYLMANNOSAMINE-6-PHOSPHATE 2-EPIMERASE-RELATED"/>
    <property type="match status" value="1"/>
</dbReference>
<dbReference type="PANTHER" id="PTHR36204:SF1">
    <property type="entry name" value="N-ACETYLMANNOSAMINE-6-PHOSPHATE 2-EPIMERASE-RELATED"/>
    <property type="match status" value="1"/>
</dbReference>
<dbReference type="Pfam" id="PF04131">
    <property type="entry name" value="NanE"/>
    <property type="match status" value="1"/>
</dbReference>
<dbReference type="SUPFAM" id="SSF51366">
    <property type="entry name" value="Ribulose-phoshate binding barrel"/>
    <property type="match status" value="1"/>
</dbReference>